<organism>
    <name type="scientific">Methanopyrus kandleri (strain AV19 / DSM 6324 / JCM 9639 / NBRC 100938)</name>
    <dbReference type="NCBI Taxonomy" id="190192"/>
    <lineage>
        <taxon>Archaea</taxon>
        <taxon>Methanobacteriati</taxon>
        <taxon>Methanobacteriota</taxon>
        <taxon>Methanomada group</taxon>
        <taxon>Methanopyri</taxon>
        <taxon>Methanopyrales</taxon>
        <taxon>Methanopyraceae</taxon>
        <taxon>Methanopyrus</taxon>
    </lineage>
</organism>
<sequence>MTSLADLPVDVSPRHEGERIRSGDMYVELAGPKSFGAELFKVVDPDEIEPDKVEVIGPDIDEMEEGGRYPFAIYVKAAGEELEEDVEGVLERRIHEFCNYVEGFMHLNQRDQIWCRVSKNVTEKGFRLEHLGIALRELYKEEFGNVIDSVEVTIMTDEEKVEEFLEYARRVYKKRDERAKGLSEEDVNEFYVCLMCQSFAPTHVCVITPDRPSLCGSITWHDAKAAYKIDPEGPIFPIEKGECLDPEAGEYEGVNEAVKEHSQGTVERVYLHSCLEYPHTSCGCFQAVVFYIPEVDGFGIVDREYPGETPIGLPFSTMAGEASGGEQQPGFVGVSYGYMESDKFLQYDGGWERVVWMPKALKERMKHAIPDELYDKIATEEDATTVEELREFLEKVEHPVVERWAEEEEEEEEKAPEEEAPAEEPTMEVKELPIAPGGGLNVKIVLKNAKIYAEKVIIKRADREDKS</sequence>
<accession>Q8TXF4</accession>
<name>ACDB_METKA</name>
<evidence type="ECO:0000255" key="1">
    <source>
        <dbReference type="HAMAP-Rule" id="MF_01138"/>
    </source>
</evidence>
<evidence type="ECO:0000256" key="2">
    <source>
        <dbReference type="SAM" id="MobiDB-lite"/>
    </source>
</evidence>
<proteinExistence type="inferred from homology"/>
<keyword id="KW-0012">Acyltransferase</keyword>
<keyword id="KW-0408">Iron</keyword>
<keyword id="KW-0411">Iron-sulfur</keyword>
<keyword id="KW-0479">Metal-binding</keyword>
<keyword id="KW-0533">Nickel</keyword>
<keyword id="KW-1185">Reference proteome</keyword>
<keyword id="KW-0808">Transferase</keyword>
<comment type="function">
    <text evidence="1">Part of a complex that catalyzes the reversible cleavage of acetyl-CoA, allowing autotrophic growth from CO(2). The alpha-epsilon complex generates CO from CO(2), while the beta subunit (this protein) combines the CO with CoA and a methyl group to form acetyl-CoA. The methyl group, which is incorporated into acetyl-CoA, is transferred to the beta subunit by a corrinoid iron-sulfur protein (the gamma-delta complex).</text>
</comment>
<comment type="catalytic activity">
    <reaction evidence="1">
        <text>Co(I)-[corrinoid Fe-S protein] + acetyl-CoA + H(+) = methyl-Co(III)-[corrinoid Fe-S protein] + CO + CoA</text>
        <dbReference type="Rhea" id="RHEA:45212"/>
        <dbReference type="Rhea" id="RHEA-COMP:11110"/>
        <dbReference type="Rhea" id="RHEA-COMP:11111"/>
        <dbReference type="ChEBI" id="CHEBI:15378"/>
        <dbReference type="ChEBI" id="CHEBI:17245"/>
        <dbReference type="ChEBI" id="CHEBI:57287"/>
        <dbReference type="ChEBI" id="CHEBI:57288"/>
        <dbReference type="ChEBI" id="CHEBI:85033"/>
        <dbReference type="ChEBI" id="CHEBI:85035"/>
        <dbReference type="EC" id="2.3.1.169"/>
    </reaction>
</comment>
<comment type="cofactor">
    <cofactor evidence="1">
        <name>[Ni-Fe-S] cluster</name>
        <dbReference type="ChEBI" id="CHEBI:60400"/>
    </cofactor>
    <text evidence="1">Binds 1 [Ni-Fe-S] cluster.</text>
</comment>
<comment type="subunit">
    <text evidence="1">Monomer. The ACDS complex is made up of alpha, epsilon, beta, gamma and delta chains with a probable stoichiometry of (alpha(2)epsilon(2))(4)-beta(8)-(gamma(1)delta(1))(8).</text>
</comment>
<comment type="similarity">
    <text evidence="1">Belongs to the CdhC family.</text>
</comment>
<dbReference type="EC" id="2.3.1.169" evidence="1"/>
<dbReference type="EMBL" id="AE009439">
    <property type="protein sequence ID" value="AAM01934.1"/>
    <property type="molecule type" value="Genomic_DNA"/>
</dbReference>
<dbReference type="RefSeq" id="WP_011019089.1">
    <property type="nucleotide sequence ID" value="NC_003551.1"/>
</dbReference>
<dbReference type="SMR" id="Q8TXF4"/>
<dbReference type="FunCoup" id="Q8TXF4">
    <property type="interactions" value="63"/>
</dbReference>
<dbReference type="STRING" id="190192.MK0720"/>
<dbReference type="PaxDb" id="190192-MK0720"/>
<dbReference type="EnsemblBacteria" id="AAM01934">
    <property type="protein sequence ID" value="AAM01934"/>
    <property type="gene ID" value="MK0720"/>
</dbReference>
<dbReference type="GeneID" id="1476821"/>
<dbReference type="KEGG" id="mka:MK0720"/>
<dbReference type="PATRIC" id="fig|190192.8.peg.761"/>
<dbReference type="HOGENOM" id="CLU_613408_0_0_2"/>
<dbReference type="InParanoid" id="Q8TXF4"/>
<dbReference type="OrthoDB" id="69951at2157"/>
<dbReference type="Proteomes" id="UP000001826">
    <property type="component" value="Chromosome"/>
</dbReference>
<dbReference type="GO" id="GO:0016407">
    <property type="term" value="F:acetyltransferase activity"/>
    <property type="evidence" value="ECO:0007669"/>
    <property type="project" value="UniProtKB-UniRule"/>
</dbReference>
<dbReference type="GO" id="GO:0043885">
    <property type="term" value="F:anaerobic carbon-monoxide dehydrogenase activity"/>
    <property type="evidence" value="ECO:0007669"/>
    <property type="project" value="InterPro"/>
</dbReference>
<dbReference type="GO" id="GO:0043884">
    <property type="term" value="F:CO-methylating acetyl-CoA synthase activity"/>
    <property type="evidence" value="ECO:0007669"/>
    <property type="project" value="UniProtKB-EC"/>
</dbReference>
<dbReference type="GO" id="GO:0005506">
    <property type="term" value="F:iron ion binding"/>
    <property type="evidence" value="ECO:0007669"/>
    <property type="project" value="UniProtKB-UniRule"/>
</dbReference>
<dbReference type="GO" id="GO:0051536">
    <property type="term" value="F:iron-sulfur cluster binding"/>
    <property type="evidence" value="ECO:0007669"/>
    <property type="project" value="UniProtKB-KW"/>
</dbReference>
<dbReference type="GO" id="GO:0016151">
    <property type="term" value="F:nickel cation binding"/>
    <property type="evidence" value="ECO:0007669"/>
    <property type="project" value="UniProtKB-UniRule"/>
</dbReference>
<dbReference type="GO" id="GO:0006084">
    <property type="term" value="P:acetyl-CoA metabolic process"/>
    <property type="evidence" value="ECO:0007669"/>
    <property type="project" value="InterPro"/>
</dbReference>
<dbReference type="Gene3D" id="3.30.1650.10">
    <property type="entry name" value="Bifunctional carbon monoxide dehydrogenase/acetyl-coa synthase(codh/acs), Chain M, domain 3"/>
    <property type="match status" value="1"/>
</dbReference>
<dbReference type="Gene3D" id="3.40.1470.10">
    <property type="entry name" value="Bifunctional carbon monoxide dehydrogenase/acetyl-coa synthase(codh/acs), Chain M, domain 5"/>
    <property type="match status" value="1"/>
</dbReference>
<dbReference type="Gene3D" id="3.40.970.20">
    <property type="entry name" value="Carbon monoxide dehydrogenase alpha subunit. Chain D, domain 4"/>
    <property type="match status" value="1"/>
</dbReference>
<dbReference type="HAMAP" id="MF_01138">
    <property type="entry name" value="CdhC"/>
    <property type="match status" value="1"/>
</dbReference>
<dbReference type="InterPro" id="IPR045822">
    <property type="entry name" value="ACS_CODH_B_C"/>
</dbReference>
<dbReference type="InterPro" id="IPR004461">
    <property type="entry name" value="CO_DH/Ac-CoA_synth_bsu"/>
</dbReference>
<dbReference type="InterPro" id="IPR038571">
    <property type="entry name" value="CO_DH/Ac-CoA_synth_bsu_3_sf"/>
</dbReference>
<dbReference type="InterPro" id="IPR023432">
    <property type="entry name" value="CO_DH/Ac-CoA_synth_bsu_arc"/>
</dbReference>
<dbReference type="InterPro" id="IPR011254">
    <property type="entry name" value="Prismane-like_sf"/>
</dbReference>
<dbReference type="NCBIfam" id="TIGR00316">
    <property type="entry name" value="cdhC"/>
    <property type="match status" value="1"/>
</dbReference>
<dbReference type="NCBIfam" id="NF003379">
    <property type="entry name" value="PRK04456.1"/>
    <property type="match status" value="1"/>
</dbReference>
<dbReference type="PANTHER" id="PTHR42281">
    <property type="match status" value="1"/>
</dbReference>
<dbReference type="PANTHER" id="PTHR42281:SF1">
    <property type="entry name" value="ACETYL-COA DECARBONYLASE_SYNTHASE COMPLEX SUBUNIT BETA 1"/>
    <property type="match status" value="1"/>
</dbReference>
<dbReference type="Pfam" id="PF19436">
    <property type="entry name" value="ACS_CODH_B_C"/>
    <property type="match status" value="1"/>
</dbReference>
<dbReference type="Pfam" id="PF03598">
    <property type="entry name" value="CdhC"/>
    <property type="match status" value="1"/>
</dbReference>
<dbReference type="SUPFAM" id="SSF56821">
    <property type="entry name" value="Prismane protein-like"/>
    <property type="match status" value="1"/>
</dbReference>
<feature type="chain" id="PRO_0000155103" description="Acetyl-CoA decarbonylase/synthase complex subunit beta">
    <location>
        <begin position="1"/>
        <end position="467"/>
    </location>
</feature>
<feature type="region of interest" description="Disordered" evidence="2">
    <location>
        <begin position="403"/>
        <end position="428"/>
    </location>
</feature>
<feature type="compositionally biased region" description="Acidic residues" evidence="2">
    <location>
        <begin position="405"/>
        <end position="426"/>
    </location>
</feature>
<feature type="binding site" evidence="1">
    <location>
        <position position="193"/>
    </location>
    <ligand>
        <name>[Ni-Fe-S] cluster</name>
        <dbReference type="ChEBI" id="CHEBI:60400"/>
    </ligand>
</feature>
<feature type="binding site" evidence="1">
    <location>
        <position position="196"/>
    </location>
    <ligand>
        <name>[Ni-Fe-S] cluster</name>
        <dbReference type="ChEBI" id="CHEBI:60400"/>
    </ligand>
</feature>
<feature type="binding site" evidence="1">
    <location>
        <position position="282"/>
    </location>
    <ligand>
        <name>[Ni-Fe-S] cluster</name>
        <dbReference type="ChEBI" id="CHEBI:60400"/>
    </ligand>
</feature>
<feature type="binding site" evidence="1">
    <location>
        <position position="284"/>
    </location>
    <ligand>
        <name>[Ni-Fe-S] cluster</name>
        <dbReference type="ChEBI" id="CHEBI:60400"/>
    </ligand>
</feature>
<gene>
    <name evidence="1" type="primary">cdhC</name>
    <name type="ordered locus">MK0720</name>
</gene>
<reference key="1">
    <citation type="journal article" date="2002" name="Proc. Natl. Acad. Sci. U.S.A.">
        <title>The complete genome of hyperthermophile Methanopyrus kandleri AV19 and monophyly of archaeal methanogens.</title>
        <authorList>
            <person name="Slesarev A.I."/>
            <person name="Mezhevaya K.V."/>
            <person name="Makarova K.S."/>
            <person name="Polushin N.N."/>
            <person name="Shcherbinina O.V."/>
            <person name="Shakhova V.V."/>
            <person name="Belova G.I."/>
            <person name="Aravind L."/>
            <person name="Natale D.A."/>
            <person name="Rogozin I.B."/>
            <person name="Tatusov R.L."/>
            <person name="Wolf Y.I."/>
            <person name="Stetter K.O."/>
            <person name="Malykh A.G."/>
            <person name="Koonin E.V."/>
            <person name="Kozyavkin S.A."/>
        </authorList>
    </citation>
    <scope>NUCLEOTIDE SEQUENCE [LARGE SCALE GENOMIC DNA]</scope>
    <source>
        <strain>AV19 / DSM 6324 / JCM 9639 / NBRC 100938</strain>
    </source>
</reference>
<protein>
    <recommendedName>
        <fullName evidence="1">Acetyl-CoA decarbonylase/synthase complex subunit beta</fullName>
        <shortName evidence="1">ACDS complex subunit beta</shortName>
        <ecNumber evidence="1">2.3.1.169</ecNumber>
    </recommendedName>
    <alternativeName>
        <fullName evidence="1">ACDS complex acyltransferase</fullName>
    </alternativeName>
</protein>